<reference key="1">
    <citation type="journal article" date="1998" name="Science">
        <title>Complete genome sequence of Treponema pallidum, the syphilis spirochete.</title>
        <authorList>
            <person name="Fraser C.M."/>
            <person name="Norris S.J."/>
            <person name="Weinstock G.M."/>
            <person name="White O."/>
            <person name="Sutton G.G."/>
            <person name="Dodson R.J."/>
            <person name="Gwinn M.L."/>
            <person name="Hickey E.K."/>
            <person name="Clayton R.A."/>
            <person name="Ketchum K.A."/>
            <person name="Sodergren E."/>
            <person name="Hardham J.M."/>
            <person name="McLeod M.P."/>
            <person name="Salzberg S.L."/>
            <person name="Peterson J.D."/>
            <person name="Khalak H.G."/>
            <person name="Richardson D.L."/>
            <person name="Howell J.K."/>
            <person name="Chidambaram M."/>
            <person name="Utterback T.R."/>
            <person name="McDonald L.A."/>
            <person name="Artiach P."/>
            <person name="Bowman C."/>
            <person name="Cotton M.D."/>
            <person name="Fujii C."/>
            <person name="Garland S.A."/>
            <person name="Hatch B."/>
            <person name="Horst K."/>
            <person name="Roberts K.M."/>
            <person name="Sandusky M."/>
            <person name="Weidman J.F."/>
            <person name="Smith H.O."/>
            <person name="Venter J.C."/>
        </authorList>
    </citation>
    <scope>NUCLEOTIDE SEQUENCE [LARGE SCALE GENOMIC DNA]</scope>
    <source>
        <strain>Nichols</strain>
    </source>
</reference>
<feature type="chain" id="PRO_0000202296" description="Uncharacterized protein TP_0661">
    <location>
        <begin position="1"/>
        <end position="170"/>
    </location>
</feature>
<gene>
    <name type="ordered locus">TP_0661</name>
</gene>
<proteinExistence type="predicted"/>
<name>Y661_TREPA</name>
<protein>
    <recommendedName>
        <fullName>Uncharacterized protein TP_0661</fullName>
    </recommendedName>
</protein>
<keyword id="KW-1185">Reference proteome</keyword>
<sequence>MDRERALHRAGQVEAILVAQIELVGQVIQVQRSVYESLRTRAWEHVESFVSRAQALSREFLHLDKRCFLLLQEVRPYGDAPVDFDSFFAYLRRADVNVHDAVVALYRTLRSKVASSKNEHDAIQHYLTHARGLAHALVSALTCEQQGSSYTKDGCPVRCAPGSLVFDRVL</sequence>
<organism>
    <name type="scientific">Treponema pallidum (strain Nichols)</name>
    <dbReference type="NCBI Taxonomy" id="243276"/>
    <lineage>
        <taxon>Bacteria</taxon>
        <taxon>Pseudomonadati</taxon>
        <taxon>Spirochaetota</taxon>
        <taxon>Spirochaetia</taxon>
        <taxon>Spirochaetales</taxon>
        <taxon>Treponemataceae</taxon>
        <taxon>Treponema</taxon>
    </lineage>
</organism>
<accession>O83667</accession>
<dbReference type="EMBL" id="AE000520">
    <property type="protein sequence ID" value="AAC65640.1"/>
    <property type="molecule type" value="Genomic_DNA"/>
</dbReference>
<dbReference type="PIR" id="F71297">
    <property type="entry name" value="F71297"/>
</dbReference>
<dbReference type="RefSeq" id="WP_010882106.1">
    <property type="nucleotide sequence ID" value="NC_021490.2"/>
</dbReference>
<dbReference type="SMR" id="O83667"/>
<dbReference type="IntAct" id="O83667">
    <property type="interactions" value="141"/>
</dbReference>
<dbReference type="STRING" id="243276.TP_0661"/>
<dbReference type="EnsemblBacteria" id="AAC65640">
    <property type="protein sequence ID" value="AAC65640"/>
    <property type="gene ID" value="TP_0661"/>
</dbReference>
<dbReference type="KEGG" id="tpa:TP_0661"/>
<dbReference type="KEGG" id="tpw:TPANIC_0661"/>
<dbReference type="eggNOG" id="ENOG5031C4H">
    <property type="taxonomic scope" value="Bacteria"/>
</dbReference>
<dbReference type="HOGENOM" id="CLU_131004_0_0_12"/>
<dbReference type="OrthoDB" id="359716at2"/>
<dbReference type="Proteomes" id="UP000000811">
    <property type="component" value="Chromosome"/>
</dbReference>